<reference key="1">
    <citation type="journal article" date="2008" name="Genome Res.">
        <title>Comparative genome analysis of Salmonella enteritidis PT4 and Salmonella gallinarum 287/91 provides insights into evolutionary and host adaptation pathways.</title>
        <authorList>
            <person name="Thomson N.R."/>
            <person name="Clayton D.J."/>
            <person name="Windhorst D."/>
            <person name="Vernikos G."/>
            <person name="Davidson S."/>
            <person name="Churcher C."/>
            <person name="Quail M.A."/>
            <person name="Stevens M."/>
            <person name="Jones M.A."/>
            <person name="Watson M."/>
            <person name="Barron A."/>
            <person name="Layton A."/>
            <person name="Pickard D."/>
            <person name="Kingsley R.A."/>
            <person name="Bignell A."/>
            <person name="Clark L."/>
            <person name="Harris B."/>
            <person name="Ormond D."/>
            <person name="Abdellah Z."/>
            <person name="Brooks K."/>
            <person name="Cherevach I."/>
            <person name="Chillingworth T."/>
            <person name="Woodward J."/>
            <person name="Norberczak H."/>
            <person name="Lord A."/>
            <person name="Arrowsmith C."/>
            <person name="Jagels K."/>
            <person name="Moule S."/>
            <person name="Mungall K."/>
            <person name="Saunders M."/>
            <person name="Whitehead S."/>
            <person name="Chabalgoity J.A."/>
            <person name="Maskell D."/>
            <person name="Humphreys T."/>
            <person name="Roberts M."/>
            <person name="Barrow P.A."/>
            <person name="Dougan G."/>
            <person name="Parkhill J."/>
        </authorList>
    </citation>
    <scope>NUCLEOTIDE SEQUENCE [LARGE SCALE GENOMIC DNA]</scope>
    <source>
        <strain>P125109</strain>
    </source>
</reference>
<feature type="chain" id="PRO_1000197337" description="Spermidine export protein MdtJ">
    <location>
        <begin position="1"/>
        <end position="120"/>
    </location>
</feature>
<feature type="transmembrane region" description="Helical" evidence="1">
    <location>
        <begin position="1"/>
        <end position="21"/>
    </location>
</feature>
<feature type="transmembrane region" description="Helical" evidence="1">
    <location>
        <begin position="31"/>
        <end position="51"/>
    </location>
</feature>
<feature type="transmembrane region" description="Helical" evidence="1">
    <location>
        <begin position="54"/>
        <end position="74"/>
    </location>
</feature>
<feature type="transmembrane region" description="Helical" evidence="1">
    <location>
        <begin position="81"/>
        <end position="101"/>
    </location>
</feature>
<sequence>MFYWILLALAIATEITGTLSMKWASVGNGNAGFILMLVMITLSYIFLSFAVKKIALGVAYALWEGIGILFITIFSVLLFDEALSTMKIAGLLTLVAGIVLIKSGTRKPGKPVKEATRATI</sequence>
<gene>
    <name evidence="1" type="primary">mdtJ</name>
    <name type="ordered locus">SEN1567</name>
</gene>
<name>MDTJ_SALEP</name>
<evidence type="ECO:0000255" key="1">
    <source>
        <dbReference type="HAMAP-Rule" id="MF_01598"/>
    </source>
</evidence>
<accession>B5QUE4</accession>
<comment type="function">
    <text evidence="1">Catalyzes the excretion of spermidine.</text>
</comment>
<comment type="subunit">
    <text evidence="1">Forms a complex with MdtI.</text>
</comment>
<comment type="subcellular location">
    <subcellularLocation>
        <location evidence="1">Cell inner membrane</location>
        <topology evidence="1">Multi-pass membrane protein</topology>
    </subcellularLocation>
</comment>
<comment type="similarity">
    <text evidence="1">Belongs to the drug/metabolite transporter (DMT) superfamily. Small multidrug resistance (SMR) (TC 2.A.7.1) family. MdtJ subfamily.</text>
</comment>
<organism>
    <name type="scientific">Salmonella enteritidis PT4 (strain P125109)</name>
    <dbReference type="NCBI Taxonomy" id="550537"/>
    <lineage>
        <taxon>Bacteria</taxon>
        <taxon>Pseudomonadati</taxon>
        <taxon>Pseudomonadota</taxon>
        <taxon>Gammaproteobacteria</taxon>
        <taxon>Enterobacterales</taxon>
        <taxon>Enterobacteriaceae</taxon>
        <taxon>Salmonella</taxon>
    </lineage>
</organism>
<dbReference type="EMBL" id="AM933172">
    <property type="protein sequence ID" value="CAR33148.1"/>
    <property type="molecule type" value="Genomic_DNA"/>
</dbReference>
<dbReference type="RefSeq" id="WP_000500278.1">
    <property type="nucleotide sequence ID" value="NC_011294.1"/>
</dbReference>
<dbReference type="SMR" id="B5QUE4"/>
<dbReference type="KEGG" id="set:SEN1567"/>
<dbReference type="HOGENOM" id="CLU_133067_0_0_6"/>
<dbReference type="Proteomes" id="UP000000613">
    <property type="component" value="Chromosome"/>
</dbReference>
<dbReference type="GO" id="GO:0005886">
    <property type="term" value="C:plasma membrane"/>
    <property type="evidence" value="ECO:0007669"/>
    <property type="project" value="UniProtKB-SubCell"/>
</dbReference>
<dbReference type="GO" id="GO:0015199">
    <property type="term" value="F:amino-acid betaine transmembrane transporter activity"/>
    <property type="evidence" value="ECO:0007669"/>
    <property type="project" value="TreeGrafter"/>
</dbReference>
<dbReference type="GO" id="GO:0015297">
    <property type="term" value="F:antiporter activity"/>
    <property type="evidence" value="ECO:0007669"/>
    <property type="project" value="TreeGrafter"/>
</dbReference>
<dbReference type="GO" id="GO:0015220">
    <property type="term" value="F:choline transmembrane transporter activity"/>
    <property type="evidence" value="ECO:0007669"/>
    <property type="project" value="TreeGrafter"/>
</dbReference>
<dbReference type="GO" id="GO:0015606">
    <property type="term" value="F:spermidine transmembrane transporter activity"/>
    <property type="evidence" value="ECO:0007669"/>
    <property type="project" value="UniProtKB-UniRule"/>
</dbReference>
<dbReference type="GO" id="GO:0031460">
    <property type="term" value="P:glycine betaine transport"/>
    <property type="evidence" value="ECO:0007669"/>
    <property type="project" value="TreeGrafter"/>
</dbReference>
<dbReference type="FunFam" id="1.10.3730.20:FF:000001">
    <property type="entry name" value="Quaternary ammonium compound resistance transporter SugE"/>
    <property type="match status" value="1"/>
</dbReference>
<dbReference type="Gene3D" id="1.10.3730.20">
    <property type="match status" value="1"/>
</dbReference>
<dbReference type="HAMAP" id="MF_01598">
    <property type="entry name" value="MdtJ"/>
    <property type="match status" value="1"/>
</dbReference>
<dbReference type="InterPro" id="IPR000390">
    <property type="entry name" value="Small_drug/metabolite_transptr"/>
</dbReference>
<dbReference type="InterPro" id="IPR045324">
    <property type="entry name" value="Small_multidrug_res"/>
</dbReference>
<dbReference type="InterPro" id="IPR023740">
    <property type="entry name" value="Spermidine_export_MdtJ"/>
</dbReference>
<dbReference type="NCBIfam" id="NF007767">
    <property type="entry name" value="PRK10452.1"/>
    <property type="match status" value="1"/>
</dbReference>
<dbReference type="PANTHER" id="PTHR30561">
    <property type="entry name" value="SMR FAMILY PROTON-DEPENDENT DRUG EFFLUX TRANSPORTER SUGE"/>
    <property type="match status" value="1"/>
</dbReference>
<dbReference type="PANTHER" id="PTHR30561:SF2">
    <property type="entry name" value="SPERMIDINE EXPORT PROTEIN MDTJ"/>
    <property type="match status" value="1"/>
</dbReference>
<dbReference type="Pfam" id="PF00893">
    <property type="entry name" value="Multi_Drug_Res"/>
    <property type="match status" value="1"/>
</dbReference>
<dbReference type="SUPFAM" id="SSF103481">
    <property type="entry name" value="Multidrug resistance efflux transporter EmrE"/>
    <property type="match status" value="1"/>
</dbReference>
<protein>
    <recommendedName>
        <fullName evidence="1">Spermidine export protein MdtJ</fullName>
    </recommendedName>
</protein>
<proteinExistence type="inferred from homology"/>
<keyword id="KW-0997">Cell inner membrane</keyword>
<keyword id="KW-1003">Cell membrane</keyword>
<keyword id="KW-0472">Membrane</keyword>
<keyword id="KW-0812">Transmembrane</keyword>
<keyword id="KW-1133">Transmembrane helix</keyword>
<keyword id="KW-0813">Transport</keyword>